<sequence>MRVYYDRDADLNLIKSKKVAIIGYGSQGRAHALNLKDSGAKDLAVALRPGSASAKKAEADGLKVMSVAEAAGWADLMMMATPDELQAGIYNNEIAPNIRDGAAIAFAHGLNVHFGLIEPKKTVDVLMIAPKGPGHTVRSEYQRGGGVPCLVAVHHDASGNALDLALSYACGVGGGRSGIIETTFREECETDLFGEQVVLCGGLVELIRAGFETLVEAGYAPEMAYFECLHEVKLIVDLIYEGGIANMNYSISNTAEWGEYVSGPRIITPETKAEMKRVLKDIQTGKFTAEWMQEWHSGAARFKATRRLNDSHQIEEVGEKLRAMMPWISKNKLVDKAKN</sequence>
<reference key="1">
    <citation type="submission" date="2006-06" db="EMBL/GenBank/DDBJ databases">
        <title>Complete sequence of chromosome of Mesorhizobium sp. BNC1.</title>
        <authorList>
            <consortium name="US DOE Joint Genome Institute"/>
            <person name="Copeland A."/>
            <person name="Lucas S."/>
            <person name="Lapidus A."/>
            <person name="Barry K."/>
            <person name="Detter J.C."/>
            <person name="Glavina del Rio T."/>
            <person name="Hammon N."/>
            <person name="Israni S."/>
            <person name="Dalin E."/>
            <person name="Tice H."/>
            <person name="Pitluck S."/>
            <person name="Chertkov O."/>
            <person name="Brettin T."/>
            <person name="Bruce D."/>
            <person name="Han C."/>
            <person name="Tapia R."/>
            <person name="Gilna P."/>
            <person name="Schmutz J."/>
            <person name="Larimer F."/>
            <person name="Land M."/>
            <person name="Hauser L."/>
            <person name="Kyrpides N."/>
            <person name="Mikhailova N."/>
            <person name="Richardson P."/>
        </authorList>
    </citation>
    <scope>NUCLEOTIDE SEQUENCE [LARGE SCALE GENOMIC DNA]</scope>
    <source>
        <strain>BNC1</strain>
    </source>
</reference>
<dbReference type="EC" id="1.1.1.86" evidence="1"/>
<dbReference type="EMBL" id="CP000390">
    <property type="protein sequence ID" value="ABG62892.1"/>
    <property type="molecule type" value="Genomic_DNA"/>
</dbReference>
<dbReference type="SMR" id="Q11I83"/>
<dbReference type="STRING" id="266779.Meso_1496"/>
<dbReference type="KEGG" id="mes:Meso_1496"/>
<dbReference type="eggNOG" id="COG0059">
    <property type="taxonomic scope" value="Bacteria"/>
</dbReference>
<dbReference type="HOGENOM" id="CLU_033821_0_1_5"/>
<dbReference type="OrthoDB" id="9804088at2"/>
<dbReference type="UniPathway" id="UPA00047">
    <property type="reaction ID" value="UER00056"/>
</dbReference>
<dbReference type="UniPathway" id="UPA00049">
    <property type="reaction ID" value="UER00060"/>
</dbReference>
<dbReference type="GO" id="GO:0005829">
    <property type="term" value="C:cytosol"/>
    <property type="evidence" value="ECO:0007669"/>
    <property type="project" value="TreeGrafter"/>
</dbReference>
<dbReference type="GO" id="GO:0004455">
    <property type="term" value="F:ketol-acid reductoisomerase activity"/>
    <property type="evidence" value="ECO:0007669"/>
    <property type="project" value="UniProtKB-UniRule"/>
</dbReference>
<dbReference type="GO" id="GO:0000287">
    <property type="term" value="F:magnesium ion binding"/>
    <property type="evidence" value="ECO:0007669"/>
    <property type="project" value="UniProtKB-UniRule"/>
</dbReference>
<dbReference type="GO" id="GO:0050661">
    <property type="term" value="F:NADP binding"/>
    <property type="evidence" value="ECO:0007669"/>
    <property type="project" value="InterPro"/>
</dbReference>
<dbReference type="GO" id="GO:0009097">
    <property type="term" value="P:isoleucine biosynthetic process"/>
    <property type="evidence" value="ECO:0007669"/>
    <property type="project" value="UniProtKB-UniRule"/>
</dbReference>
<dbReference type="GO" id="GO:0009099">
    <property type="term" value="P:L-valine biosynthetic process"/>
    <property type="evidence" value="ECO:0007669"/>
    <property type="project" value="UniProtKB-UniRule"/>
</dbReference>
<dbReference type="FunFam" id="3.40.50.720:FF:000023">
    <property type="entry name" value="Ketol-acid reductoisomerase (NADP(+))"/>
    <property type="match status" value="1"/>
</dbReference>
<dbReference type="Gene3D" id="6.10.240.10">
    <property type="match status" value="1"/>
</dbReference>
<dbReference type="Gene3D" id="3.40.50.720">
    <property type="entry name" value="NAD(P)-binding Rossmann-like Domain"/>
    <property type="match status" value="1"/>
</dbReference>
<dbReference type="HAMAP" id="MF_00435">
    <property type="entry name" value="IlvC"/>
    <property type="match status" value="1"/>
</dbReference>
<dbReference type="InterPro" id="IPR008927">
    <property type="entry name" value="6-PGluconate_DH-like_C_sf"/>
</dbReference>
<dbReference type="InterPro" id="IPR013023">
    <property type="entry name" value="KARI"/>
</dbReference>
<dbReference type="InterPro" id="IPR000506">
    <property type="entry name" value="KARI_C"/>
</dbReference>
<dbReference type="InterPro" id="IPR013116">
    <property type="entry name" value="KARI_N"/>
</dbReference>
<dbReference type="InterPro" id="IPR014359">
    <property type="entry name" value="KARI_prok"/>
</dbReference>
<dbReference type="InterPro" id="IPR036291">
    <property type="entry name" value="NAD(P)-bd_dom_sf"/>
</dbReference>
<dbReference type="NCBIfam" id="TIGR00465">
    <property type="entry name" value="ilvC"/>
    <property type="match status" value="1"/>
</dbReference>
<dbReference type="NCBIfam" id="NF004017">
    <property type="entry name" value="PRK05479.1"/>
    <property type="match status" value="1"/>
</dbReference>
<dbReference type="NCBIfam" id="NF009940">
    <property type="entry name" value="PRK13403.1"/>
    <property type="match status" value="1"/>
</dbReference>
<dbReference type="PANTHER" id="PTHR21371">
    <property type="entry name" value="KETOL-ACID REDUCTOISOMERASE, MITOCHONDRIAL"/>
    <property type="match status" value="1"/>
</dbReference>
<dbReference type="PANTHER" id="PTHR21371:SF1">
    <property type="entry name" value="KETOL-ACID REDUCTOISOMERASE, MITOCHONDRIAL"/>
    <property type="match status" value="1"/>
</dbReference>
<dbReference type="Pfam" id="PF01450">
    <property type="entry name" value="KARI_C"/>
    <property type="match status" value="1"/>
</dbReference>
<dbReference type="Pfam" id="PF07991">
    <property type="entry name" value="KARI_N"/>
    <property type="match status" value="1"/>
</dbReference>
<dbReference type="PIRSF" id="PIRSF000116">
    <property type="entry name" value="IlvC_gammaproteo"/>
    <property type="match status" value="1"/>
</dbReference>
<dbReference type="SUPFAM" id="SSF48179">
    <property type="entry name" value="6-phosphogluconate dehydrogenase C-terminal domain-like"/>
    <property type="match status" value="1"/>
</dbReference>
<dbReference type="SUPFAM" id="SSF51735">
    <property type="entry name" value="NAD(P)-binding Rossmann-fold domains"/>
    <property type="match status" value="1"/>
</dbReference>
<dbReference type="PROSITE" id="PS51851">
    <property type="entry name" value="KARI_C"/>
    <property type="match status" value="1"/>
</dbReference>
<dbReference type="PROSITE" id="PS51850">
    <property type="entry name" value="KARI_N"/>
    <property type="match status" value="1"/>
</dbReference>
<comment type="function">
    <text evidence="1">Involved in the biosynthesis of branched-chain amino acids (BCAA). Catalyzes an alkyl-migration followed by a ketol-acid reduction of (S)-2-acetolactate (S2AL) to yield (R)-2,3-dihydroxy-isovalerate. In the isomerase reaction, S2AL is rearranged via a Mg-dependent methyl migration to produce 3-hydroxy-3-methyl-2-ketobutyrate (HMKB). In the reductase reaction, this 2-ketoacid undergoes a metal-dependent reduction by NADPH to yield (R)-2,3-dihydroxy-isovalerate.</text>
</comment>
<comment type="catalytic activity">
    <reaction evidence="1">
        <text>(2R)-2,3-dihydroxy-3-methylbutanoate + NADP(+) = (2S)-2-acetolactate + NADPH + H(+)</text>
        <dbReference type="Rhea" id="RHEA:22068"/>
        <dbReference type="ChEBI" id="CHEBI:15378"/>
        <dbReference type="ChEBI" id="CHEBI:49072"/>
        <dbReference type="ChEBI" id="CHEBI:57783"/>
        <dbReference type="ChEBI" id="CHEBI:58349"/>
        <dbReference type="ChEBI" id="CHEBI:58476"/>
        <dbReference type="EC" id="1.1.1.86"/>
    </reaction>
</comment>
<comment type="catalytic activity">
    <reaction evidence="1">
        <text>(2R,3R)-2,3-dihydroxy-3-methylpentanoate + NADP(+) = (S)-2-ethyl-2-hydroxy-3-oxobutanoate + NADPH + H(+)</text>
        <dbReference type="Rhea" id="RHEA:13493"/>
        <dbReference type="ChEBI" id="CHEBI:15378"/>
        <dbReference type="ChEBI" id="CHEBI:49256"/>
        <dbReference type="ChEBI" id="CHEBI:49258"/>
        <dbReference type="ChEBI" id="CHEBI:57783"/>
        <dbReference type="ChEBI" id="CHEBI:58349"/>
        <dbReference type="EC" id="1.1.1.86"/>
    </reaction>
</comment>
<comment type="cofactor">
    <cofactor evidence="1">
        <name>Mg(2+)</name>
        <dbReference type="ChEBI" id="CHEBI:18420"/>
    </cofactor>
    <text evidence="1">Binds 2 magnesium ions per subunit.</text>
</comment>
<comment type="pathway">
    <text evidence="1">Amino-acid biosynthesis; L-isoleucine biosynthesis; L-isoleucine from 2-oxobutanoate: step 2/4.</text>
</comment>
<comment type="pathway">
    <text evidence="1">Amino-acid biosynthesis; L-valine biosynthesis; L-valine from pyruvate: step 2/4.</text>
</comment>
<comment type="similarity">
    <text evidence="1">Belongs to the ketol-acid reductoisomerase family.</text>
</comment>
<accession>Q11I83</accession>
<organism>
    <name type="scientific">Chelativorans sp. (strain BNC1)</name>
    <dbReference type="NCBI Taxonomy" id="266779"/>
    <lineage>
        <taxon>Bacteria</taxon>
        <taxon>Pseudomonadati</taxon>
        <taxon>Pseudomonadota</taxon>
        <taxon>Alphaproteobacteria</taxon>
        <taxon>Hyphomicrobiales</taxon>
        <taxon>Phyllobacteriaceae</taxon>
        <taxon>Chelativorans</taxon>
    </lineage>
</organism>
<feature type="chain" id="PRO_0000252766" description="Ketol-acid reductoisomerase (NADP(+))">
    <location>
        <begin position="1"/>
        <end position="339"/>
    </location>
</feature>
<feature type="domain" description="KARI N-terminal Rossmann" evidence="2">
    <location>
        <begin position="1"/>
        <end position="182"/>
    </location>
</feature>
<feature type="domain" description="KARI C-terminal knotted" evidence="3">
    <location>
        <begin position="183"/>
        <end position="328"/>
    </location>
</feature>
<feature type="active site" evidence="1">
    <location>
        <position position="108"/>
    </location>
</feature>
<feature type="binding site" evidence="1">
    <location>
        <begin position="24"/>
        <end position="27"/>
    </location>
    <ligand>
        <name>NADP(+)</name>
        <dbReference type="ChEBI" id="CHEBI:58349"/>
    </ligand>
</feature>
<feature type="binding site" evidence="1">
    <location>
        <position position="48"/>
    </location>
    <ligand>
        <name>NADP(+)</name>
        <dbReference type="ChEBI" id="CHEBI:58349"/>
    </ligand>
</feature>
<feature type="binding site" evidence="1">
    <location>
        <position position="51"/>
    </location>
    <ligand>
        <name>NADP(+)</name>
        <dbReference type="ChEBI" id="CHEBI:58349"/>
    </ligand>
</feature>
<feature type="binding site" evidence="1">
    <location>
        <position position="53"/>
    </location>
    <ligand>
        <name>NADP(+)</name>
        <dbReference type="ChEBI" id="CHEBI:58349"/>
    </ligand>
</feature>
<feature type="binding site" evidence="1">
    <location>
        <begin position="83"/>
        <end position="86"/>
    </location>
    <ligand>
        <name>NADP(+)</name>
        <dbReference type="ChEBI" id="CHEBI:58349"/>
    </ligand>
</feature>
<feature type="binding site" evidence="1">
    <location>
        <position position="134"/>
    </location>
    <ligand>
        <name>NADP(+)</name>
        <dbReference type="ChEBI" id="CHEBI:58349"/>
    </ligand>
</feature>
<feature type="binding site" evidence="1">
    <location>
        <position position="191"/>
    </location>
    <ligand>
        <name>Mg(2+)</name>
        <dbReference type="ChEBI" id="CHEBI:18420"/>
        <label>1</label>
    </ligand>
</feature>
<feature type="binding site" evidence="1">
    <location>
        <position position="191"/>
    </location>
    <ligand>
        <name>Mg(2+)</name>
        <dbReference type="ChEBI" id="CHEBI:18420"/>
        <label>2</label>
    </ligand>
</feature>
<feature type="binding site" evidence="1">
    <location>
        <position position="195"/>
    </location>
    <ligand>
        <name>Mg(2+)</name>
        <dbReference type="ChEBI" id="CHEBI:18420"/>
        <label>1</label>
    </ligand>
</feature>
<feature type="binding site" evidence="1">
    <location>
        <position position="227"/>
    </location>
    <ligand>
        <name>Mg(2+)</name>
        <dbReference type="ChEBI" id="CHEBI:18420"/>
        <label>2</label>
    </ligand>
</feature>
<feature type="binding site" evidence="1">
    <location>
        <position position="231"/>
    </location>
    <ligand>
        <name>Mg(2+)</name>
        <dbReference type="ChEBI" id="CHEBI:18420"/>
        <label>2</label>
    </ligand>
</feature>
<feature type="binding site" evidence="1">
    <location>
        <position position="252"/>
    </location>
    <ligand>
        <name>substrate</name>
    </ligand>
</feature>
<protein>
    <recommendedName>
        <fullName evidence="1">Ketol-acid reductoisomerase (NADP(+))</fullName>
        <shortName evidence="1">KARI</shortName>
        <ecNumber evidence="1">1.1.1.86</ecNumber>
    </recommendedName>
    <alternativeName>
        <fullName evidence="1">Acetohydroxy-acid isomeroreductase</fullName>
        <shortName evidence="1">AHIR</shortName>
    </alternativeName>
    <alternativeName>
        <fullName evidence="1">Alpha-keto-beta-hydroxylacyl reductoisomerase</fullName>
    </alternativeName>
    <alternativeName>
        <fullName evidence="1">Ketol-acid reductoisomerase type 1</fullName>
    </alternativeName>
    <alternativeName>
        <fullName evidence="1">Ketol-acid reductoisomerase type I</fullName>
    </alternativeName>
</protein>
<name>ILVC_CHESB</name>
<keyword id="KW-0028">Amino-acid biosynthesis</keyword>
<keyword id="KW-0100">Branched-chain amino acid biosynthesis</keyword>
<keyword id="KW-0460">Magnesium</keyword>
<keyword id="KW-0479">Metal-binding</keyword>
<keyword id="KW-0521">NADP</keyword>
<keyword id="KW-0560">Oxidoreductase</keyword>
<proteinExistence type="inferred from homology"/>
<evidence type="ECO:0000255" key="1">
    <source>
        <dbReference type="HAMAP-Rule" id="MF_00435"/>
    </source>
</evidence>
<evidence type="ECO:0000255" key="2">
    <source>
        <dbReference type="PROSITE-ProRule" id="PRU01197"/>
    </source>
</evidence>
<evidence type="ECO:0000255" key="3">
    <source>
        <dbReference type="PROSITE-ProRule" id="PRU01198"/>
    </source>
</evidence>
<gene>
    <name evidence="1" type="primary">ilvC</name>
    <name type="ordered locus">Meso_1496</name>
</gene>